<geneLocation type="mitochondrion"/>
<keyword id="KW-0249">Electron transport</keyword>
<keyword id="KW-0349">Heme</keyword>
<keyword id="KW-0408">Iron</keyword>
<keyword id="KW-0472">Membrane</keyword>
<keyword id="KW-0479">Metal-binding</keyword>
<keyword id="KW-0496">Mitochondrion</keyword>
<keyword id="KW-0999">Mitochondrion inner membrane</keyword>
<keyword id="KW-0679">Respiratory chain</keyword>
<keyword id="KW-0812">Transmembrane</keyword>
<keyword id="KW-1133">Transmembrane helix</keyword>
<keyword id="KW-0813">Transport</keyword>
<keyword id="KW-0830">Ubiquinone</keyword>
<evidence type="ECO:0000250" key="1"/>
<evidence type="ECO:0000250" key="2">
    <source>
        <dbReference type="UniProtKB" id="P00157"/>
    </source>
</evidence>
<evidence type="ECO:0000255" key="3">
    <source>
        <dbReference type="PROSITE-ProRule" id="PRU00967"/>
    </source>
</evidence>
<evidence type="ECO:0000255" key="4">
    <source>
        <dbReference type="PROSITE-ProRule" id="PRU00968"/>
    </source>
</evidence>
<reference key="1">
    <citation type="journal article" date="2002" name="Mol. Biol. Evol.">
        <title>Mitochondrial DNA sequence evolution and phylogeny of the Atlantic Alcidae, including the extinct great auk (Pinguinus impennis).</title>
        <authorList>
            <person name="Moum T."/>
            <person name="Arnason U."/>
            <person name="Arnason E."/>
        </authorList>
    </citation>
    <scope>NUCLEOTIDE SEQUENCE [GENOMIC DNA]</scope>
    <source>
        <tissue>Heart</tissue>
    </source>
</reference>
<organism>
    <name type="scientific">Uria aalge</name>
    <name type="common">Common mure</name>
    <name type="synonym">Colymbus aalge</name>
    <dbReference type="NCBI Taxonomy" id="13746"/>
    <lineage>
        <taxon>Eukaryota</taxon>
        <taxon>Metazoa</taxon>
        <taxon>Chordata</taxon>
        <taxon>Craniata</taxon>
        <taxon>Vertebrata</taxon>
        <taxon>Euteleostomi</taxon>
        <taxon>Archelosauria</taxon>
        <taxon>Archosauria</taxon>
        <taxon>Dinosauria</taxon>
        <taxon>Saurischia</taxon>
        <taxon>Theropoda</taxon>
        <taxon>Coelurosauria</taxon>
        <taxon>Aves</taxon>
        <taxon>Neognathae</taxon>
        <taxon>Neoaves</taxon>
        <taxon>Charadriiformes</taxon>
        <taxon>Alcidae</taxon>
        <taxon>Uria</taxon>
    </lineage>
</organism>
<accession>Q8LWM4</accession>
<proteinExistence type="inferred from homology"/>
<comment type="function">
    <text evidence="2">Component of the ubiquinol-cytochrome c reductase complex (complex III or cytochrome b-c1 complex) that is part of the mitochondrial respiratory chain. The b-c1 complex mediates electron transfer from ubiquinol to cytochrome c. Contributes to the generation of a proton gradient across the mitochondrial membrane that is then used for ATP synthesis.</text>
</comment>
<comment type="cofactor">
    <cofactor evidence="2">
        <name>heme b</name>
        <dbReference type="ChEBI" id="CHEBI:60344"/>
    </cofactor>
    <text evidence="2">Binds 2 heme b groups non-covalently.</text>
</comment>
<comment type="subunit">
    <text evidence="2">The cytochrome bc1 complex contains 11 subunits: 3 respiratory subunits (MT-CYB, CYC1 and UQCRFS1), 2 core proteins (UQCRC1 and UQCRC2) and 6 low-molecular weight proteins (UQCRH/QCR6, UQCRB/QCR7, UQCRQ/QCR8, UQCR10/QCR9, UQCR11/QCR10 and a cleavage product of UQCRFS1). This cytochrome bc1 complex then forms a dimer.</text>
</comment>
<comment type="subcellular location">
    <subcellularLocation>
        <location evidence="2">Mitochondrion inner membrane</location>
        <topology evidence="2">Multi-pass membrane protein</topology>
    </subcellularLocation>
</comment>
<comment type="miscellaneous">
    <text evidence="1">Heme 1 (or BL or b562) is low-potential and absorbs at about 562 nm, and heme 2 (or BH or b566) is high-potential and absorbs at about 566 nm.</text>
</comment>
<comment type="similarity">
    <text evidence="3 4">Belongs to the cytochrome b family.</text>
</comment>
<comment type="caution">
    <text evidence="2">The full-length protein contains only eight transmembrane helices, not nine as predicted by bioinformatics tools.</text>
</comment>
<dbReference type="EMBL" id="AJ242686">
    <property type="protein sequence ID" value="CAC80352.1"/>
    <property type="molecule type" value="Genomic_DNA"/>
</dbReference>
<dbReference type="SMR" id="Q8LWM4"/>
<dbReference type="GO" id="GO:0005743">
    <property type="term" value="C:mitochondrial inner membrane"/>
    <property type="evidence" value="ECO:0007669"/>
    <property type="project" value="UniProtKB-SubCell"/>
</dbReference>
<dbReference type="GO" id="GO:0045275">
    <property type="term" value="C:respiratory chain complex III"/>
    <property type="evidence" value="ECO:0007669"/>
    <property type="project" value="InterPro"/>
</dbReference>
<dbReference type="GO" id="GO:0046872">
    <property type="term" value="F:metal ion binding"/>
    <property type="evidence" value="ECO:0007669"/>
    <property type="project" value="UniProtKB-KW"/>
</dbReference>
<dbReference type="GO" id="GO:0008121">
    <property type="term" value="F:ubiquinol-cytochrome-c reductase activity"/>
    <property type="evidence" value="ECO:0007669"/>
    <property type="project" value="InterPro"/>
</dbReference>
<dbReference type="GO" id="GO:0006122">
    <property type="term" value="P:mitochondrial electron transport, ubiquinol to cytochrome c"/>
    <property type="evidence" value="ECO:0007669"/>
    <property type="project" value="TreeGrafter"/>
</dbReference>
<dbReference type="CDD" id="cd00290">
    <property type="entry name" value="cytochrome_b_C"/>
    <property type="match status" value="1"/>
</dbReference>
<dbReference type="CDD" id="cd00284">
    <property type="entry name" value="Cytochrome_b_N"/>
    <property type="match status" value="1"/>
</dbReference>
<dbReference type="FunFam" id="1.20.810.10:FF:000002">
    <property type="entry name" value="Cytochrome b"/>
    <property type="match status" value="1"/>
</dbReference>
<dbReference type="Gene3D" id="1.20.810.10">
    <property type="entry name" value="Cytochrome Bc1 Complex, Chain C"/>
    <property type="match status" value="1"/>
</dbReference>
<dbReference type="InterPro" id="IPR005798">
    <property type="entry name" value="Cyt_b/b6_C"/>
</dbReference>
<dbReference type="InterPro" id="IPR036150">
    <property type="entry name" value="Cyt_b/b6_C_sf"/>
</dbReference>
<dbReference type="InterPro" id="IPR005797">
    <property type="entry name" value="Cyt_b/b6_N"/>
</dbReference>
<dbReference type="InterPro" id="IPR027387">
    <property type="entry name" value="Cytb/b6-like_sf"/>
</dbReference>
<dbReference type="InterPro" id="IPR030689">
    <property type="entry name" value="Cytochrome_b"/>
</dbReference>
<dbReference type="InterPro" id="IPR048260">
    <property type="entry name" value="Cytochrome_b_C_euk/bac"/>
</dbReference>
<dbReference type="InterPro" id="IPR048259">
    <property type="entry name" value="Cytochrome_b_N_euk/bac"/>
</dbReference>
<dbReference type="InterPro" id="IPR016174">
    <property type="entry name" value="Di-haem_cyt_TM"/>
</dbReference>
<dbReference type="PANTHER" id="PTHR19271">
    <property type="entry name" value="CYTOCHROME B"/>
    <property type="match status" value="1"/>
</dbReference>
<dbReference type="PANTHER" id="PTHR19271:SF16">
    <property type="entry name" value="CYTOCHROME B"/>
    <property type="match status" value="1"/>
</dbReference>
<dbReference type="Pfam" id="PF00032">
    <property type="entry name" value="Cytochrom_B_C"/>
    <property type="match status" value="1"/>
</dbReference>
<dbReference type="Pfam" id="PF00033">
    <property type="entry name" value="Cytochrome_B"/>
    <property type="match status" value="1"/>
</dbReference>
<dbReference type="PIRSF" id="PIRSF038885">
    <property type="entry name" value="COB"/>
    <property type="match status" value="1"/>
</dbReference>
<dbReference type="SUPFAM" id="SSF81648">
    <property type="entry name" value="a domain/subunit of cytochrome bc1 complex (Ubiquinol-cytochrome c reductase)"/>
    <property type="match status" value="1"/>
</dbReference>
<dbReference type="SUPFAM" id="SSF81342">
    <property type="entry name" value="Transmembrane di-heme cytochromes"/>
    <property type="match status" value="1"/>
</dbReference>
<dbReference type="PROSITE" id="PS51003">
    <property type="entry name" value="CYTB_CTER"/>
    <property type="match status" value="1"/>
</dbReference>
<dbReference type="PROSITE" id="PS51002">
    <property type="entry name" value="CYTB_NTER"/>
    <property type="match status" value="1"/>
</dbReference>
<gene>
    <name type="primary">MT-CYB</name>
    <name type="synonym">COB</name>
    <name type="synonym">CYTB</name>
    <name type="synonym">MTCYB</name>
</gene>
<protein>
    <recommendedName>
        <fullName>Cytochrome b</fullName>
    </recommendedName>
    <alternativeName>
        <fullName>Complex III subunit 3</fullName>
    </alternativeName>
    <alternativeName>
        <fullName>Complex III subunit III</fullName>
    </alternativeName>
    <alternativeName>
        <fullName>Cytochrome b-c1 complex subunit 3</fullName>
    </alternativeName>
    <alternativeName>
        <fullName>Ubiquinol-cytochrome-c reductase complex cytochrome b subunit</fullName>
    </alternativeName>
</protein>
<name>CYB_URIAL</name>
<feature type="chain" id="PRO_0000061696" description="Cytochrome b">
    <location>
        <begin position="1"/>
        <end position="380"/>
    </location>
</feature>
<feature type="transmembrane region" description="Helical" evidence="2">
    <location>
        <begin position="34"/>
        <end position="54"/>
    </location>
</feature>
<feature type="transmembrane region" description="Helical" evidence="2">
    <location>
        <begin position="78"/>
        <end position="99"/>
    </location>
</feature>
<feature type="transmembrane region" description="Helical" evidence="2">
    <location>
        <begin position="114"/>
        <end position="134"/>
    </location>
</feature>
<feature type="transmembrane region" description="Helical" evidence="2">
    <location>
        <begin position="179"/>
        <end position="199"/>
    </location>
</feature>
<feature type="transmembrane region" description="Helical" evidence="2">
    <location>
        <begin position="227"/>
        <end position="247"/>
    </location>
</feature>
<feature type="transmembrane region" description="Helical" evidence="2">
    <location>
        <begin position="289"/>
        <end position="309"/>
    </location>
</feature>
<feature type="transmembrane region" description="Helical" evidence="2">
    <location>
        <begin position="321"/>
        <end position="341"/>
    </location>
</feature>
<feature type="transmembrane region" description="Helical" evidence="2">
    <location>
        <begin position="348"/>
        <end position="368"/>
    </location>
</feature>
<feature type="binding site" description="axial binding residue" evidence="2">
    <location>
        <position position="84"/>
    </location>
    <ligand>
        <name>heme b</name>
        <dbReference type="ChEBI" id="CHEBI:60344"/>
        <label>b562</label>
    </ligand>
    <ligandPart>
        <name>Fe</name>
        <dbReference type="ChEBI" id="CHEBI:18248"/>
    </ligandPart>
</feature>
<feature type="binding site" description="axial binding residue" evidence="2">
    <location>
        <position position="98"/>
    </location>
    <ligand>
        <name>heme b</name>
        <dbReference type="ChEBI" id="CHEBI:60344"/>
        <label>b566</label>
    </ligand>
    <ligandPart>
        <name>Fe</name>
        <dbReference type="ChEBI" id="CHEBI:18248"/>
    </ligandPart>
</feature>
<feature type="binding site" description="axial binding residue" evidence="2">
    <location>
        <position position="183"/>
    </location>
    <ligand>
        <name>heme b</name>
        <dbReference type="ChEBI" id="CHEBI:60344"/>
        <label>b562</label>
    </ligand>
    <ligandPart>
        <name>Fe</name>
        <dbReference type="ChEBI" id="CHEBI:18248"/>
    </ligandPart>
</feature>
<feature type="binding site" description="axial binding residue" evidence="2">
    <location>
        <position position="197"/>
    </location>
    <ligand>
        <name>heme b</name>
        <dbReference type="ChEBI" id="CHEBI:60344"/>
        <label>b566</label>
    </ligand>
    <ligandPart>
        <name>Fe</name>
        <dbReference type="ChEBI" id="CHEBI:18248"/>
    </ligandPart>
</feature>
<feature type="binding site" evidence="2">
    <location>
        <position position="202"/>
    </location>
    <ligand>
        <name>a ubiquinone</name>
        <dbReference type="ChEBI" id="CHEBI:16389"/>
    </ligand>
</feature>
<sequence length="380" mass="42477">MAPNLRKSHPLLKLVNNSLIDLPTPSNISAWWNFGSLLGICLLTQILTGLLLATHYTADTTLAFSSVAHTCRNVQYGWLIRNLHANGASFFFICIYLHIGRGFYYGSYLNKETWNTGVILLLALMATAFVGYVLPWGQMSFWGATVITNLFSAIPYIGQTLVEWAWGGFSVDNPTLTRFFALHFLLPFMIAGLAFIHLTFLHESGSNNPLGIPSNCDKIPFHPYFSLKDILGFIIMFLPLTTLALFSPNLLGDPENFTPANPLVTPPHIKPEWYFLFAYAILRSIPNKLGGVLALAASVLVLFLTPLLHKSKQRAMTFRPLSQLLFWTLVANLLILTWVGSQPVEHPFIIIGQLASLTYFTILLLLFPIIGALENKMLNY</sequence>